<keyword id="KW-0520">NAD</keyword>
<keyword id="KW-0560">Oxidoreductase</keyword>
<keyword id="KW-1185">Reference proteome</keyword>
<keyword id="KW-0816">Tricarboxylic acid cycle</keyword>
<organism>
    <name type="scientific">Brucella anthropi (strain ATCC 49188 / DSM 6882 / CCUG 24695 / JCM 21032 / LMG 3331 / NBRC 15819 / NCTC 12168 / Alc 37)</name>
    <name type="common">Ochrobactrum anthropi</name>
    <dbReference type="NCBI Taxonomy" id="439375"/>
    <lineage>
        <taxon>Bacteria</taxon>
        <taxon>Pseudomonadati</taxon>
        <taxon>Pseudomonadota</taxon>
        <taxon>Alphaproteobacteria</taxon>
        <taxon>Hyphomicrobiales</taxon>
        <taxon>Brucellaceae</taxon>
        <taxon>Brucella/Ochrobactrum group</taxon>
        <taxon>Brucella</taxon>
    </lineage>
</organism>
<dbReference type="EC" id="1.1.1.37" evidence="1"/>
<dbReference type="EMBL" id="CP000758">
    <property type="protein sequence ID" value="ABS13651.1"/>
    <property type="molecule type" value="Genomic_DNA"/>
</dbReference>
<dbReference type="RefSeq" id="WP_010657595.1">
    <property type="nucleotide sequence ID" value="NC_009667.1"/>
</dbReference>
<dbReference type="SMR" id="A6WXE7"/>
<dbReference type="STRING" id="439375.Oant_0930"/>
<dbReference type="GeneID" id="61318642"/>
<dbReference type="KEGG" id="oan:Oant_0930"/>
<dbReference type="eggNOG" id="COG0039">
    <property type="taxonomic scope" value="Bacteria"/>
</dbReference>
<dbReference type="HOGENOM" id="CLU_045401_2_1_5"/>
<dbReference type="PhylomeDB" id="A6WXE7"/>
<dbReference type="Proteomes" id="UP000002301">
    <property type="component" value="Chromosome 1"/>
</dbReference>
<dbReference type="GO" id="GO:0004459">
    <property type="term" value="F:L-lactate dehydrogenase activity"/>
    <property type="evidence" value="ECO:0007669"/>
    <property type="project" value="TreeGrafter"/>
</dbReference>
<dbReference type="GO" id="GO:0030060">
    <property type="term" value="F:L-malate dehydrogenase (NAD+) activity"/>
    <property type="evidence" value="ECO:0007669"/>
    <property type="project" value="UniProtKB-UniRule"/>
</dbReference>
<dbReference type="GO" id="GO:0006089">
    <property type="term" value="P:lactate metabolic process"/>
    <property type="evidence" value="ECO:0007669"/>
    <property type="project" value="TreeGrafter"/>
</dbReference>
<dbReference type="GO" id="GO:0006099">
    <property type="term" value="P:tricarboxylic acid cycle"/>
    <property type="evidence" value="ECO:0007669"/>
    <property type="project" value="UniProtKB-UniRule"/>
</dbReference>
<dbReference type="CDD" id="cd01339">
    <property type="entry name" value="LDH-like_MDH"/>
    <property type="match status" value="1"/>
</dbReference>
<dbReference type="FunFam" id="3.40.50.720:FF:000018">
    <property type="entry name" value="Malate dehydrogenase"/>
    <property type="match status" value="1"/>
</dbReference>
<dbReference type="FunFam" id="3.90.110.10:FF:000004">
    <property type="entry name" value="Malate dehydrogenase"/>
    <property type="match status" value="1"/>
</dbReference>
<dbReference type="Gene3D" id="3.90.110.10">
    <property type="entry name" value="Lactate dehydrogenase/glycoside hydrolase, family 4, C-terminal"/>
    <property type="match status" value="1"/>
</dbReference>
<dbReference type="Gene3D" id="3.40.50.720">
    <property type="entry name" value="NAD(P)-binding Rossmann-like Domain"/>
    <property type="match status" value="1"/>
</dbReference>
<dbReference type="HAMAP" id="MF_00487">
    <property type="entry name" value="Malate_dehydrog_3"/>
    <property type="match status" value="1"/>
</dbReference>
<dbReference type="InterPro" id="IPR001557">
    <property type="entry name" value="L-lactate/malate_DH"/>
</dbReference>
<dbReference type="InterPro" id="IPR022383">
    <property type="entry name" value="Lactate/malate_DH_C"/>
</dbReference>
<dbReference type="InterPro" id="IPR001236">
    <property type="entry name" value="Lactate/malate_DH_N"/>
</dbReference>
<dbReference type="InterPro" id="IPR015955">
    <property type="entry name" value="Lactate_DH/Glyco_Ohase_4_C"/>
</dbReference>
<dbReference type="InterPro" id="IPR011275">
    <property type="entry name" value="Malate_DH_type3"/>
</dbReference>
<dbReference type="InterPro" id="IPR036291">
    <property type="entry name" value="NAD(P)-bd_dom_sf"/>
</dbReference>
<dbReference type="NCBIfam" id="TIGR01763">
    <property type="entry name" value="MalateDH_bact"/>
    <property type="match status" value="1"/>
</dbReference>
<dbReference type="NCBIfam" id="NF004863">
    <property type="entry name" value="PRK06223.1"/>
    <property type="match status" value="1"/>
</dbReference>
<dbReference type="PANTHER" id="PTHR43128">
    <property type="entry name" value="L-2-HYDROXYCARBOXYLATE DEHYDROGENASE (NAD(P)(+))"/>
    <property type="match status" value="1"/>
</dbReference>
<dbReference type="PANTHER" id="PTHR43128:SF16">
    <property type="entry name" value="L-LACTATE DEHYDROGENASE"/>
    <property type="match status" value="1"/>
</dbReference>
<dbReference type="Pfam" id="PF02866">
    <property type="entry name" value="Ldh_1_C"/>
    <property type="match status" value="1"/>
</dbReference>
<dbReference type="Pfam" id="PF00056">
    <property type="entry name" value="Ldh_1_N"/>
    <property type="match status" value="1"/>
</dbReference>
<dbReference type="PIRSF" id="PIRSF000102">
    <property type="entry name" value="Lac_mal_DH"/>
    <property type="match status" value="1"/>
</dbReference>
<dbReference type="PRINTS" id="PR00086">
    <property type="entry name" value="LLDHDRGNASE"/>
</dbReference>
<dbReference type="SUPFAM" id="SSF56327">
    <property type="entry name" value="LDH C-terminal domain-like"/>
    <property type="match status" value="1"/>
</dbReference>
<dbReference type="SUPFAM" id="SSF51735">
    <property type="entry name" value="NAD(P)-binding Rossmann-fold domains"/>
    <property type="match status" value="1"/>
</dbReference>
<comment type="function">
    <text evidence="1">Catalyzes the reversible oxidation of malate to oxaloacetate.</text>
</comment>
<comment type="catalytic activity">
    <reaction evidence="1">
        <text>(S)-malate + NAD(+) = oxaloacetate + NADH + H(+)</text>
        <dbReference type="Rhea" id="RHEA:21432"/>
        <dbReference type="ChEBI" id="CHEBI:15378"/>
        <dbReference type="ChEBI" id="CHEBI:15589"/>
        <dbReference type="ChEBI" id="CHEBI:16452"/>
        <dbReference type="ChEBI" id="CHEBI:57540"/>
        <dbReference type="ChEBI" id="CHEBI:57945"/>
        <dbReference type="EC" id="1.1.1.37"/>
    </reaction>
</comment>
<comment type="similarity">
    <text evidence="1">Belongs to the LDH/MDH superfamily. MDH type 3 family.</text>
</comment>
<name>MDH_BRUA4</name>
<protein>
    <recommendedName>
        <fullName evidence="1">Malate dehydrogenase</fullName>
        <ecNumber evidence="1">1.1.1.37</ecNumber>
    </recommendedName>
</protein>
<feature type="chain" id="PRO_1000026481" description="Malate dehydrogenase">
    <location>
        <begin position="1"/>
        <end position="320"/>
    </location>
</feature>
<feature type="active site" description="Proton acceptor" evidence="1">
    <location>
        <position position="176"/>
    </location>
</feature>
<feature type="binding site" evidence="1">
    <location>
        <begin position="10"/>
        <end position="15"/>
    </location>
    <ligand>
        <name>NAD(+)</name>
        <dbReference type="ChEBI" id="CHEBI:57540"/>
    </ligand>
</feature>
<feature type="binding site" evidence="1">
    <location>
        <position position="34"/>
    </location>
    <ligand>
        <name>NAD(+)</name>
        <dbReference type="ChEBI" id="CHEBI:57540"/>
    </ligand>
</feature>
<feature type="binding site" evidence="1">
    <location>
        <position position="83"/>
    </location>
    <ligand>
        <name>substrate</name>
    </ligand>
</feature>
<feature type="binding site" evidence="1">
    <location>
        <position position="89"/>
    </location>
    <ligand>
        <name>substrate</name>
    </ligand>
</feature>
<feature type="binding site" evidence="1">
    <location>
        <position position="96"/>
    </location>
    <ligand>
        <name>NAD(+)</name>
        <dbReference type="ChEBI" id="CHEBI:57540"/>
    </ligand>
</feature>
<feature type="binding site" evidence="1">
    <location>
        <begin position="119"/>
        <end position="121"/>
    </location>
    <ligand>
        <name>NAD(+)</name>
        <dbReference type="ChEBI" id="CHEBI:57540"/>
    </ligand>
</feature>
<feature type="binding site" evidence="1">
    <location>
        <position position="121"/>
    </location>
    <ligand>
        <name>substrate</name>
    </ligand>
</feature>
<feature type="binding site" evidence="1">
    <location>
        <position position="152"/>
    </location>
    <ligand>
        <name>substrate</name>
    </ligand>
</feature>
<evidence type="ECO:0000255" key="1">
    <source>
        <dbReference type="HAMAP-Rule" id="MF_00487"/>
    </source>
</evidence>
<sequence>MARNKIALIGSGMIGGTLAHLAGLKELGDVVLFDIAEGIPQGKGLDIAESSPVDGFDAKYTGANDYAAIEGADVVIVTAGVPRKPGMSRDDLLGINLKVMEQVGAGIKKYAPEAFVICITNPLDAMVWALQKFSGLPAHKVVGMAGVLDSARFRYFLSEEFNVSVEDVTAFVLGGHGDSMVPLARYSTVAGIPLPDLVKMGWTSQDKLDKIIQRTRDGGAEIVGLLKTGSAFYAPAASAIQMAESYLKDKKRVLPVAAQLTGQYGVKDMYVGVPTVIGANGVERIIEIDLDKNEKAEFDKSVASVAGLCEACIGIAPSLK</sequence>
<accession>A6WXE7</accession>
<gene>
    <name evidence="1" type="primary">mdh</name>
    <name type="ordered locus">Oant_0930</name>
</gene>
<proteinExistence type="inferred from homology"/>
<reference key="1">
    <citation type="journal article" date="2011" name="J. Bacteriol.">
        <title>Genome of Ochrobactrum anthropi ATCC 49188 T, a versatile opportunistic pathogen and symbiont of several eukaryotic hosts.</title>
        <authorList>
            <person name="Chain P.S."/>
            <person name="Lang D.M."/>
            <person name="Comerci D.J."/>
            <person name="Malfatti S.A."/>
            <person name="Vergez L.M."/>
            <person name="Shin M."/>
            <person name="Ugalde R.A."/>
            <person name="Garcia E."/>
            <person name="Tolmasky M.E."/>
        </authorList>
    </citation>
    <scope>NUCLEOTIDE SEQUENCE [LARGE SCALE GENOMIC DNA]</scope>
    <source>
        <strain>ATCC 49188 / DSM 6882 / CCUG 24695 / JCM 21032 / LMG 3331 / NBRC 15819 / NCTC 12168 / Alc 37</strain>
    </source>
</reference>